<dbReference type="EMBL" id="CP000524">
    <property type="protein sequence ID" value="ABM45395.1"/>
    <property type="molecule type" value="Genomic_DNA"/>
</dbReference>
<dbReference type="RefSeq" id="WP_005765903.1">
    <property type="nucleotide sequence ID" value="NC_008783.1"/>
</dbReference>
<dbReference type="SMR" id="A1UR66"/>
<dbReference type="STRING" id="360095.BARBAKC583_0130"/>
<dbReference type="GeneID" id="4684109"/>
<dbReference type="KEGG" id="bbk:BARBAKC583_0130"/>
<dbReference type="PATRIC" id="fig|360095.6.peg.131"/>
<dbReference type="eggNOG" id="COG3750">
    <property type="taxonomic scope" value="Bacteria"/>
</dbReference>
<dbReference type="HOGENOM" id="CLU_158651_3_0_5"/>
<dbReference type="OrthoDB" id="9813793at2"/>
<dbReference type="Proteomes" id="UP000000643">
    <property type="component" value="Chromosome"/>
</dbReference>
<dbReference type="GO" id="GO:0003677">
    <property type="term" value="F:DNA binding"/>
    <property type="evidence" value="ECO:0007669"/>
    <property type="project" value="InterPro"/>
</dbReference>
<dbReference type="HAMAP" id="MF_00797">
    <property type="entry name" value="UPF0335"/>
    <property type="match status" value="1"/>
</dbReference>
<dbReference type="InterPro" id="IPR018753">
    <property type="entry name" value="GapR-like"/>
</dbReference>
<dbReference type="InterPro" id="IPR046367">
    <property type="entry name" value="GapR-like_DNA-bd"/>
</dbReference>
<dbReference type="NCBIfam" id="NF010247">
    <property type="entry name" value="PRK13694.1"/>
    <property type="match status" value="1"/>
</dbReference>
<dbReference type="Pfam" id="PF10073">
    <property type="entry name" value="GapR_DNA-bd"/>
    <property type="match status" value="1"/>
</dbReference>
<name>Y130_BARBK</name>
<evidence type="ECO:0000255" key="1">
    <source>
        <dbReference type="HAMAP-Rule" id="MF_00797"/>
    </source>
</evidence>
<protein>
    <recommendedName>
        <fullName evidence="1">UPF0335 protein BARBAKC583_0130</fullName>
    </recommendedName>
</protein>
<reference key="1">
    <citation type="submission" date="2006-12" db="EMBL/GenBank/DDBJ databases">
        <authorList>
            <person name="Hendrix L."/>
            <person name="Mohamoud Y."/>
            <person name="Radune D."/>
            <person name="Shvartsbeyn A."/>
            <person name="Daugherty S."/>
            <person name="Dodson R."/>
            <person name="Durkin A.S."/>
            <person name="Harkins D."/>
            <person name="Huot H."/>
            <person name="Kothari S.P."/>
            <person name="Madupu R."/>
            <person name="Li J."/>
            <person name="Nelson W.C."/>
            <person name="Shrivastava S."/>
            <person name="Giglio M.G."/>
            <person name="Haft D."/>
            <person name="Selengut J."/>
            <person name="Fraser-Ligget C."/>
            <person name="Seshadri R."/>
        </authorList>
    </citation>
    <scope>NUCLEOTIDE SEQUENCE [LARGE SCALE GENOMIC DNA]</scope>
    <source>
        <strain>ATCC 35685 / KC583 / Herrer 020/F12,63</strain>
    </source>
</reference>
<organism>
    <name type="scientific">Bartonella bacilliformis (strain ATCC 35685 / KC583 / Herrer 020/F12,63)</name>
    <dbReference type="NCBI Taxonomy" id="360095"/>
    <lineage>
        <taxon>Bacteria</taxon>
        <taxon>Pseudomonadati</taxon>
        <taxon>Pseudomonadota</taxon>
        <taxon>Alphaproteobacteria</taxon>
        <taxon>Hyphomicrobiales</taxon>
        <taxon>Bartonellaceae</taxon>
        <taxon>Bartonella</taxon>
    </lineage>
</organism>
<gene>
    <name type="ordered locus">BARBAKC583_0130</name>
</gene>
<sequence>MNTASDQTHAISVNQLRSFIERIERLEEEKKAIADDIKDVYTELKGSGFDSKAVRKIVGLRKQEDHKRMEEEAVIQLYKNALGMT</sequence>
<feature type="chain" id="PRO_1000046955" description="UPF0335 protein BARBAKC583_0130">
    <location>
        <begin position="1"/>
        <end position="85"/>
    </location>
</feature>
<accession>A1UR66</accession>
<comment type="similarity">
    <text evidence="1">Belongs to the UPF0335 family.</text>
</comment>
<proteinExistence type="inferred from homology"/>